<accession>Q04ES5</accession>
<evidence type="ECO:0000255" key="1">
    <source>
        <dbReference type="HAMAP-Rule" id="MF_01007"/>
    </source>
</evidence>
<keyword id="KW-0963">Cytoplasm</keyword>
<keyword id="KW-0489">Methyltransferase</keyword>
<keyword id="KW-1185">Reference proteome</keyword>
<keyword id="KW-0698">rRNA processing</keyword>
<keyword id="KW-0949">S-adenosyl-L-methionine</keyword>
<keyword id="KW-0808">Transferase</keyword>
<feature type="chain" id="PRO_0000387014" description="Ribosomal RNA small subunit methyltransferase H">
    <location>
        <begin position="1"/>
        <end position="314"/>
    </location>
</feature>
<feature type="binding site" evidence="1">
    <location>
        <begin position="35"/>
        <end position="37"/>
    </location>
    <ligand>
        <name>S-adenosyl-L-methionine</name>
        <dbReference type="ChEBI" id="CHEBI:59789"/>
    </ligand>
</feature>
<feature type="binding site" evidence="1">
    <location>
        <position position="54"/>
    </location>
    <ligand>
        <name>S-adenosyl-L-methionine</name>
        <dbReference type="ChEBI" id="CHEBI:59789"/>
    </ligand>
</feature>
<feature type="binding site" evidence="1">
    <location>
        <position position="83"/>
    </location>
    <ligand>
        <name>S-adenosyl-L-methionine</name>
        <dbReference type="ChEBI" id="CHEBI:59789"/>
    </ligand>
</feature>
<feature type="binding site" evidence="1">
    <location>
        <position position="104"/>
    </location>
    <ligand>
        <name>S-adenosyl-L-methionine</name>
        <dbReference type="ChEBI" id="CHEBI:59789"/>
    </ligand>
</feature>
<feature type="binding site" evidence="1">
    <location>
        <position position="111"/>
    </location>
    <ligand>
        <name>S-adenosyl-L-methionine</name>
        <dbReference type="ChEBI" id="CHEBI:59789"/>
    </ligand>
</feature>
<name>RSMH_OENOB</name>
<proteinExistence type="inferred from homology"/>
<sequence length="314" mass="35778">MTADYGHVTVFLRQAVENLAVKTNGIYVDATLGGGGHTDLLLKKALHGHVYSFDQDENAIDFNKKRFSKEISEGRLSLIHSNFQNLIKELNLLKVFAIDGIVFDLGVSSPQFDDEKRGFSYRSDARLDMRMDQSQSLDAYQIVNTWEYKDLASIINRYGEEKFASSIARKIIKRREVQPIITTEELVETIKEALPDKILHKKGHPAKKTFQAIRIAVNDELNVLQEALKQASQLLNSGGRISVITFQSLEDRIVKHFFNQLATKNQLPSKLPVPDKFIQEEFKLLTKHPLIPSVEEIEENHRAHSAKLRVLEKN</sequence>
<reference key="1">
    <citation type="journal article" date="2006" name="Proc. Natl. Acad. Sci. U.S.A.">
        <title>Comparative genomics of the lactic acid bacteria.</title>
        <authorList>
            <person name="Makarova K.S."/>
            <person name="Slesarev A."/>
            <person name="Wolf Y.I."/>
            <person name="Sorokin A."/>
            <person name="Mirkin B."/>
            <person name="Koonin E.V."/>
            <person name="Pavlov A."/>
            <person name="Pavlova N."/>
            <person name="Karamychev V."/>
            <person name="Polouchine N."/>
            <person name="Shakhova V."/>
            <person name="Grigoriev I."/>
            <person name="Lou Y."/>
            <person name="Rohksar D."/>
            <person name="Lucas S."/>
            <person name="Huang K."/>
            <person name="Goodstein D.M."/>
            <person name="Hawkins T."/>
            <person name="Plengvidhya V."/>
            <person name="Welker D."/>
            <person name="Hughes J."/>
            <person name="Goh Y."/>
            <person name="Benson A."/>
            <person name="Baldwin K."/>
            <person name="Lee J.-H."/>
            <person name="Diaz-Muniz I."/>
            <person name="Dosti B."/>
            <person name="Smeianov V."/>
            <person name="Wechter W."/>
            <person name="Barabote R."/>
            <person name="Lorca G."/>
            <person name="Altermann E."/>
            <person name="Barrangou R."/>
            <person name="Ganesan B."/>
            <person name="Xie Y."/>
            <person name="Rawsthorne H."/>
            <person name="Tamir D."/>
            <person name="Parker C."/>
            <person name="Breidt F."/>
            <person name="Broadbent J.R."/>
            <person name="Hutkins R."/>
            <person name="O'Sullivan D."/>
            <person name="Steele J."/>
            <person name="Unlu G."/>
            <person name="Saier M.H. Jr."/>
            <person name="Klaenhammer T."/>
            <person name="Richardson P."/>
            <person name="Kozyavkin S."/>
            <person name="Weimer B.C."/>
            <person name="Mills D.A."/>
        </authorList>
    </citation>
    <scope>NUCLEOTIDE SEQUENCE [LARGE SCALE GENOMIC DNA]</scope>
    <source>
        <strain>ATCC BAA-331 / PSU-1</strain>
    </source>
</reference>
<comment type="function">
    <text evidence="1">Specifically methylates the N4 position of cytidine in position 1402 (C1402) of 16S rRNA.</text>
</comment>
<comment type="catalytic activity">
    <reaction evidence="1">
        <text>cytidine(1402) in 16S rRNA + S-adenosyl-L-methionine = N(4)-methylcytidine(1402) in 16S rRNA + S-adenosyl-L-homocysteine + H(+)</text>
        <dbReference type="Rhea" id="RHEA:42928"/>
        <dbReference type="Rhea" id="RHEA-COMP:10286"/>
        <dbReference type="Rhea" id="RHEA-COMP:10287"/>
        <dbReference type="ChEBI" id="CHEBI:15378"/>
        <dbReference type="ChEBI" id="CHEBI:57856"/>
        <dbReference type="ChEBI" id="CHEBI:59789"/>
        <dbReference type="ChEBI" id="CHEBI:74506"/>
        <dbReference type="ChEBI" id="CHEBI:82748"/>
        <dbReference type="EC" id="2.1.1.199"/>
    </reaction>
</comment>
<comment type="subcellular location">
    <subcellularLocation>
        <location evidence="1">Cytoplasm</location>
    </subcellularLocation>
</comment>
<comment type="similarity">
    <text evidence="1">Belongs to the methyltransferase superfamily. RsmH family.</text>
</comment>
<protein>
    <recommendedName>
        <fullName evidence="1">Ribosomal RNA small subunit methyltransferase H</fullName>
        <ecNumber evidence="1">2.1.1.199</ecNumber>
    </recommendedName>
    <alternativeName>
        <fullName evidence="1">16S rRNA m(4)C1402 methyltransferase</fullName>
    </alternativeName>
    <alternativeName>
        <fullName evidence="1">rRNA (cytosine-N(4)-)-methyltransferase RsmH</fullName>
    </alternativeName>
</protein>
<organism>
    <name type="scientific">Oenococcus oeni (strain ATCC BAA-331 / PSU-1)</name>
    <dbReference type="NCBI Taxonomy" id="203123"/>
    <lineage>
        <taxon>Bacteria</taxon>
        <taxon>Bacillati</taxon>
        <taxon>Bacillota</taxon>
        <taxon>Bacilli</taxon>
        <taxon>Lactobacillales</taxon>
        <taxon>Lactobacillaceae</taxon>
        <taxon>Oenococcus</taxon>
    </lineage>
</organism>
<dbReference type="EC" id="2.1.1.199" evidence="1"/>
<dbReference type="EMBL" id="CP000411">
    <property type="protein sequence ID" value="ABJ57047.1"/>
    <property type="molecule type" value="Genomic_DNA"/>
</dbReference>
<dbReference type="RefSeq" id="WP_002818996.1">
    <property type="nucleotide sequence ID" value="NC_008528.1"/>
</dbReference>
<dbReference type="SMR" id="Q04ES5"/>
<dbReference type="STRING" id="203123.OEOE_1151"/>
<dbReference type="GeneID" id="75065759"/>
<dbReference type="KEGG" id="ooe:OEOE_1151"/>
<dbReference type="eggNOG" id="COG0275">
    <property type="taxonomic scope" value="Bacteria"/>
</dbReference>
<dbReference type="HOGENOM" id="CLU_038422_2_0_9"/>
<dbReference type="Proteomes" id="UP000000774">
    <property type="component" value="Chromosome"/>
</dbReference>
<dbReference type="GO" id="GO:0005737">
    <property type="term" value="C:cytoplasm"/>
    <property type="evidence" value="ECO:0007669"/>
    <property type="project" value="UniProtKB-SubCell"/>
</dbReference>
<dbReference type="GO" id="GO:0071424">
    <property type="term" value="F:rRNA (cytosine-N4-)-methyltransferase activity"/>
    <property type="evidence" value="ECO:0007669"/>
    <property type="project" value="UniProtKB-UniRule"/>
</dbReference>
<dbReference type="GO" id="GO:0070475">
    <property type="term" value="P:rRNA base methylation"/>
    <property type="evidence" value="ECO:0007669"/>
    <property type="project" value="UniProtKB-UniRule"/>
</dbReference>
<dbReference type="FunFam" id="1.10.150.170:FF:000001">
    <property type="entry name" value="Ribosomal RNA small subunit methyltransferase H"/>
    <property type="match status" value="1"/>
</dbReference>
<dbReference type="Gene3D" id="1.10.150.170">
    <property type="entry name" value="Putative methyltransferase TM0872, insert domain"/>
    <property type="match status" value="1"/>
</dbReference>
<dbReference type="Gene3D" id="3.40.50.150">
    <property type="entry name" value="Vaccinia Virus protein VP39"/>
    <property type="match status" value="1"/>
</dbReference>
<dbReference type="HAMAP" id="MF_01007">
    <property type="entry name" value="16SrRNA_methyltr_H"/>
    <property type="match status" value="1"/>
</dbReference>
<dbReference type="InterPro" id="IPR002903">
    <property type="entry name" value="RsmH"/>
</dbReference>
<dbReference type="InterPro" id="IPR023397">
    <property type="entry name" value="SAM-dep_MeTrfase_MraW_recog"/>
</dbReference>
<dbReference type="InterPro" id="IPR029063">
    <property type="entry name" value="SAM-dependent_MTases_sf"/>
</dbReference>
<dbReference type="NCBIfam" id="TIGR00006">
    <property type="entry name" value="16S rRNA (cytosine(1402)-N(4))-methyltransferase RsmH"/>
    <property type="match status" value="1"/>
</dbReference>
<dbReference type="PANTHER" id="PTHR11265:SF0">
    <property type="entry name" value="12S RRNA N4-METHYLCYTIDINE METHYLTRANSFERASE"/>
    <property type="match status" value="1"/>
</dbReference>
<dbReference type="PANTHER" id="PTHR11265">
    <property type="entry name" value="S-ADENOSYL-METHYLTRANSFERASE MRAW"/>
    <property type="match status" value="1"/>
</dbReference>
<dbReference type="Pfam" id="PF01795">
    <property type="entry name" value="Methyltransf_5"/>
    <property type="match status" value="1"/>
</dbReference>
<dbReference type="PIRSF" id="PIRSF004486">
    <property type="entry name" value="MraW"/>
    <property type="match status" value="1"/>
</dbReference>
<dbReference type="SUPFAM" id="SSF81799">
    <property type="entry name" value="Putative methyltransferase TM0872, insert domain"/>
    <property type="match status" value="1"/>
</dbReference>
<dbReference type="SUPFAM" id="SSF53335">
    <property type="entry name" value="S-adenosyl-L-methionine-dependent methyltransferases"/>
    <property type="match status" value="1"/>
</dbReference>
<gene>
    <name evidence="1" type="primary">rsmH</name>
    <name type="synonym">mraW</name>
    <name type="ordered locus">OEOE_1151</name>
</gene>